<organismHost>
    <name type="scientific">Cynomys gunnisoni</name>
    <name type="common">Gunnison's prairie dog</name>
    <name type="synonym">Spermophilus gunnisoni</name>
    <dbReference type="NCBI Taxonomy" id="45479"/>
</organismHost>
<organismHost>
    <name type="scientific">Cynomys leucurus</name>
    <name type="common">White-tailed prairie dog</name>
    <dbReference type="NCBI Taxonomy" id="99825"/>
</organismHost>
<organismHost>
    <name type="scientific">Cynomys ludovicianus</name>
    <name type="common">Black-tailed prairie dog</name>
    <dbReference type="NCBI Taxonomy" id="45480"/>
</organismHost>
<organismHost>
    <name type="scientific">Cynomys mexicanus</name>
    <name type="common">Mexican prairie dog</name>
    <dbReference type="NCBI Taxonomy" id="99826"/>
</organismHost>
<organismHost>
    <name type="scientific">Cynomys parvidens</name>
    <name type="common">Utah prairie dog</name>
    <dbReference type="NCBI Taxonomy" id="99827"/>
</organismHost>
<organismHost>
    <name type="scientific">Gliridae</name>
    <name type="common">dormice</name>
    <dbReference type="NCBI Taxonomy" id="30650"/>
</organismHost>
<organismHost>
    <name type="scientific">Heliosciurus ruwenzorii</name>
    <name type="common">Ruwenzori sun squirrel</name>
    <dbReference type="NCBI Taxonomy" id="226685"/>
</organismHost>
<organismHost>
    <name type="scientific">Homo sapiens</name>
    <name type="common">Human</name>
    <dbReference type="NCBI Taxonomy" id="9606"/>
</organismHost>
<organismHost>
    <name type="scientific">Mus musculus</name>
    <name type="common">Mouse</name>
    <dbReference type="NCBI Taxonomy" id="10090"/>
</organismHost>
<comment type="function">
    <text evidence="2">Acts with RNA polymerase to initiate transcription from late gene promoters.</text>
</comment>
<comment type="cofactor">
    <cofactor evidence="1">
        <name>Mg(2+)</name>
        <dbReference type="ChEBI" id="CHEBI:18420"/>
    </cofactor>
    <cofactor evidence="1">
        <name>Mn(2+)</name>
        <dbReference type="ChEBI" id="CHEBI:29035"/>
    </cofactor>
</comment>
<comment type="subunit">
    <text evidence="2">Interacts with the late transcription elongation factor VLTF-4/OPG110. Interacts with the late transcription factors VLTF-1.</text>
</comment>
<comment type="subcellular location">
    <subcellularLocation>
        <location evidence="1">Host mitochondrion</location>
    </subcellularLocation>
    <text evidence="1">Mitochondria localization is required to efficiently decap mRNAs.</text>
</comment>
<comment type="similarity">
    <text evidence="4">Belongs to the Nudix hydrolase family.</text>
</comment>
<evidence type="ECO:0000250" key="1">
    <source>
        <dbReference type="UniProtKB" id="P04312"/>
    </source>
</evidence>
<evidence type="ECO:0000250" key="2">
    <source>
        <dbReference type="UniProtKB" id="P68319"/>
    </source>
</evidence>
<evidence type="ECO:0000255" key="3">
    <source>
        <dbReference type="PROSITE-ProRule" id="PRU00794"/>
    </source>
</evidence>
<evidence type="ECO:0000305" key="4"/>
<organism>
    <name type="scientific">Monkeypox virus</name>
    <dbReference type="NCBI Taxonomy" id="10244"/>
    <lineage>
        <taxon>Viruses</taxon>
        <taxon>Varidnaviria</taxon>
        <taxon>Bamfordvirae</taxon>
        <taxon>Nucleocytoviricota</taxon>
        <taxon>Pokkesviricetes</taxon>
        <taxon>Chitovirales</taxon>
        <taxon>Poxviridae</taxon>
        <taxon>Chordopoxvirinae</taxon>
        <taxon>Orthopoxvirus</taxon>
    </lineage>
</organism>
<reference key="1">
    <citation type="journal article" date="2013" name="Am. J. Trop. Med. Hyg.">
        <title>Detection of human monkeypox in the republic of the congo following intensive community education.</title>
        <authorList>
            <person name="Reynolds M.G."/>
            <person name="Emerson G.L."/>
            <person name="Pukuta E."/>
            <person name="Karhemere S."/>
            <person name="Muyembe J.J."/>
            <person name="Bikindou A."/>
            <person name="McCollum A.M."/>
            <person name="Moses C."/>
            <person name="Wilkins K."/>
            <person name="Zhao H."/>
            <person name="Damon I.K."/>
            <person name="Karem K.L."/>
            <person name="Li Y."/>
            <person name="Carroll D.S."/>
            <person name="Mombouli J.V."/>
        </authorList>
    </citation>
    <scope>NUCLEOTIDE SEQUENCE [GENOMIC DNA]</scope>
    <source>
        <strain>ROC2010</strain>
    </source>
</reference>
<reference key="2">
    <citation type="journal article" date="2022" name="J. Infect. Dis.">
        <title>Exportation of Monkeypox virus from the African continent.</title>
        <authorList>
            <person name="Mauldin M.R."/>
            <person name="McCollum A.M."/>
            <person name="Nakazawa Y.J."/>
            <person name="Mandra A."/>
            <person name="Whitehouse E.R."/>
            <person name="Davidson W."/>
            <person name="Zhao H."/>
            <person name="Gao J."/>
            <person name="Li Y."/>
            <person name="Doty J."/>
            <person name="Yinka-Ogunleye A."/>
            <person name="Akinpelu A."/>
            <person name="Aruna O."/>
            <person name="Naidoo D."/>
            <person name="Lewandowski K."/>
            <person name="Afrough B."/>
            <person name="Graham V."/>
            <person name="Aarons E."/>
            <person name="Hewson R."/>
            <person name="Vipond R."/>
            <person name="Dunning J."/>
            <person name="Chand M."/>
            <person name="Brown C."/>
            <person name="Cohen-Gihon I."/>
            <person name="Erez N."/>
            <person name="Shifman O."/>
            <person name="Israeli O."/>
            <person name="Sharon M."/>
            <person name="Schwartz E."/>
            <person name="Beth-Din A."/>
            <person name="Zvi A."/>
            <person name="Mak T.M."/>
            <person name="Ng Y.K."/>
            <person name="Cui L."/>
            <person name="Lin R.T.P."/>
            <person name="Olson V.A."/>
            <person name="Brooks T."/>
            <person name="Paran N."/>
            <person name="Ihekweazu C."/>
            <person name="Reynolds M.G."/>
        </authorList>
    </citation>
    <scope>NUCLEOTIDE SEQUENCE [LARGE SCALE GENOMIC DNA]</scope>
    <source>
        <strain>MPXV-M5312_HM12_Rivers</strain>
    </source>
</reference>
<sequence>MSFYRSSIISQIIKYNRRLAKSIICEDDSQIITLTAFVNQCLWCHKRVSVSAILLTTDNKILVCNRRDSFLYSEIIRTRNMYRKKRLFLNYSNYLNKQERSILSSFFSLDPATADNDRINAIYPGGIPKRGENVPECLSREIKEEVNIDNSFVFIDTRFFIHGIIEDTIINKFFEVIFFVGRISLTSDQIIDTFKSNHEIKDLIFLDPNSGNGLQYEIAKYALDTAKLKCYGHRGCYYESLKKLTEDD</sequence>
<name>PG122_MONPV</name>
<gene>
    <name type="primary">OPG122</name>
    <name type="ORF">MPXVgp107</name>
</gene>
<protein>
    <recommendedName>
        <fullName>mRNA-decapping protein OPG122</fullName>
    </recommendedName>
</protein>
<accession>A0A7H0DN94</accession>
<keyword id="KW-1045">Host mitochondrion</keyword>
<keyword id="KW-0378">Hydrolase</keyword>
<keyword id="KW-0460">Magnesium</keyword>
<keyword id="KW-0464">Manganese</keyword>
<keyword id="KW-0479">Metal-binding</keyword>
<keyword id="KW-1185">Reference proteome</keyword>
<feature type="chain" id="PRO_0000457576" description="mRNA-decapping protein OPG122">
    <location>
        <begin position="1"/>
        <end position="248"/>
    </location>
</feature>
<feature type="domain" description="Nudix hydrolase" evidence="3">
    <location>
        <begin position="45"/>
        <end position="227"/>
    </location>
</feature>
<feature type="short sequence motif" description="Nudix box" evidence="3">
    <location>
        <begin position="125"/>
        <end position="147"/>
    </location>
</feature>
<dbReference type="EMBL" id="KC257461">
    <property type="protein sequence ID" value="AGF37011.1"/>
    <property type="molecule type" value="Genomic_DNA"/>
</dbReference>
<dbReference type="EMBL" id="MT903340">
    <property type="protein sequence ID" value="QNP12977.1"/>
    <property type="molecule type" value="Genomic_DNA"/>
</dbReference>
<dbReference type="RefSeq" id="NP_536534.1">
    <property type="nucleotide sequence ID" value="NC_003310.1"/>
</dbReference>
<dbReference type="RefSeq" id="YP_010377104.1">
    <property type="nucleotide sequence ID" value="NC_063383.1"/>
</dbReference>
<dbReference type="SMR" id="A0A7H0DN94"/>
<dbReference type="GeneID" id="72551517"/>
<dbReference type="GeneID" id="929061"/>
<dbReference type="KEGG" id="vg:929061"/>
<dbReference type="Proteomes" id="UP000516359">
    <property type="component" value="Genome"/>
</dbReference>
<dbReference type="GO" id="GO:0033650">
    <property type="term" value="C:host cell mitochondrion"/>
    <property type="evidence" value="ECO:0007669"/>
    <property type="project" value="UniProtKB-SubCell"/>
</dbReference>
<dbReference type="GO" id="GO:0046872">
    <property type="term" value="F:metal ion binding"/>
    <property type="evidence" value="ECO:0007669"/>
    <property type="project" value="UniProtKB-KW"/>
</dbReference>
<dbReference type="GO" id="GO:0016791">
    <property type="term" value="F:phosphatase activity"/>
    <property type="evidence" value="ECO:0007669"/>
    <property type="project" value="InterPro"/>
</dbReference>
<dbReference type="Gene3D" id="3.90.79.10">
    <property type="entry name" value="Nucleoside Triphosphate Pyrophosphohydrolase"/>
    <property type="match status" value="1"/>
</dbReference>
<dbReference type="InterPro" id="IPR015797">
    <property type="entry name" value="NUDIX_hydrolase-like_dom_sf"/>
</dbReference>
<dbReference type="InterPro" id="IPR020084">
    <property type="entry name" value="NUDIX_hydrolase_CS"/>
</dbReference>
<dbReference type="InterPro" id="IPR000086">
    <property type="entry name" value="NUDIX_hydrolase_dom"/>
</dbReference>
<dbReference type="InterPro" id="IPR003301">
    <property type="entry name" value="Vaccinia_D10_decapping"/>
</dbReference>
<dbReference type="InterPro" id="IPR013683">
    <property type="entry name" value="Vaccinia_D10_N"/>
</dbReference>
<dbReference type="Pfam" id="PF00293">
    <property type="entry name" value="NUDIX"/>
    <property type="match status" value="1"/>
</dbReference>
<dbReference type="Pfam" id="PF08476">
    <property type="entry name" value="VD10_N"/>
    <property type="match status" value="1"/>
</dbReference>
<dbReference type="PRINTS" id="PR01364">
    <property type="entry name" value="VD10PROTEIN"/>
</dbReference>
<dbReference type="SUPFAM" id="SSF55811">
    <property type="entry name" value="Nudix"/>
    <property type="match status" value="1"/>
</dbReference>
<dbReference type="PROSITE" id="PS51462">
    <property type="entry name" value="NUDIX"/>
    <property type="match status" value="1"/>
</dbReference>
<dbReference type="PROSITE" id="PS00893">
    <property type="entry name" value="NUDIX_BOX"/>
    <property type="match status" value="1"/>
</dbReference>
<proteinExistence type="inferred from homology"/>